<accession>A0L104</accession>
<evidence type="ECO:0000255" key="1">
    <source>
        <dbReference type="HAMAP-Rule" id="MF_00272"/>
    </source>
</evidence>
<evidence type="ECO:0000255" key="2">
    <source>
        <dbReference type="PROSITE-ProRule" id="PRU01066"/>
    </source>
</evidence>
<protein>
    <recommendedName>
        <fullName evidence="1">Glycine cleavage system H protein</fullName>
    </recommendedName>
</protein>
<keyword id="KW-0450">Lipoyl</keyword>
<gene>
    <name evidence="1" type="primary">gcvH</name>
    <name type="ordered locus">Shewana3_3500</name>
</gene>
<proteinExistence type="inferred from homology"/>
<feature type="chain" id="PRO_0000302433" description="Glycine cleavage system H protein">
    <location>
        <begin position="1"/>
        <end position="129"/>
    </location>
</feature>
<feature type="domain" description="Lipoyl-binding" evidence="2">
    <location>
        <begin position="24"/>
        <end position="106"/>
    </location>
</feature>
<feature type="modified residue" description="N6-lipoyllysine" evidence="1">
    <location>
        <position position="65"/>
    </location>
</feature>
<dbReference type="EMBL" id="CP000469">
    <property type="protein sequence ID" value="ABK49723.1"/>
    <property type="molecule type" value="Genomic_DNA"/>
</dbReference>
<dbReference type="RefSeq" id="WP_011071083.1">
    <property type="nucleotide sequence ID" value="NC_008577.1"/>
</dbReference>
<dbReference type="SMR" id="A0L104"/>
<dbReference type="STRING" id="94122.Shewana3_3500"/>
<dbReference type="GeneID" id="94729424"/>
<dbReference type="KEGG" id="shn:Shewana3_3500"/>
<dbReference type="eggNOG" id="COG0509">
    <property type="taxonomic scope" value="Bacteria"/>
</dbReference>
<dbReference type="HOGENOM" id="CLU_097408_2_1_6"/>
<dbReference type="OrthoDB" id="9796712at2"/>
<dbReference type="Proteomes" id="UP000002589">
    <property type="component" value="Chromosome"/>
</dbReference>
<dbReference type="GO" id="GO:0005829">
    <property type="term" value="C:cytosol"/>
    <property type="evidence" value="ECO:0007669"/>
    <property type="project" value="TreeGrafter"/>
</dbReference>
<dbReference type="GO" id="GO:0005960">
    <property type="term" value="C:glycine cleavage complex"/>
    <property type="evidence" value="ECO:0007669"/>
    <property type="project" value="InterPro"/>
</dbReference>
<dbReference type="GO" id="GO:0019464">
    <property type="term" value="P:glycine decarboxylation via glycine cleavage system"/>
    <property type="evidence" value="ECO:0007669"/>
    <property type="project" value="UniProtKB-UniRule"/>
</dbReference>
<dbReference type="CDD" id="cd06848">
    <property type="entry name" value="GCS_H"/>
    <property type="match status" value="1"/>
</dbReference>
<dbReference type="FunFam" id="2.40.50.100:FF:000011">
    <property type="entry name" value="Glycine cleavage system H protein"/>
    <property type="match status" value="1"/>
</dbReference>
<dbReference type="Gene3D" id="2.40.50.100">
    <property type="match status" value="1"/>
</dbReference>
<dbReference type="HAMAP" id="MF_00272">
    <property type="entry name" value="GcvH"/>
    <property type="match status" value="1"/>
</dbReference>
<dbReference type="InterPro" id="IPR003016">
    <property type="entry name" value="2-oxoA_DH_lipoyl-BS"/>
</dbReference>
<dbReference type="InterPro" id="IPR000089">
    <property type="entry name" value="Biotin_lipoyl"/>
</dbReference>
<dbReference type="InterPro" id="IPR002930">
    <property type="entry name" value="GCV_H"/>
</dbReference>
<dbReference type="InterPro" id="IPR033753">
    <property type="entry name" value="GCV_H/Fam206"/>
</dbReference>
<dbReference type="InterPro" id="IPR017453">
    <property type="entry name" value="GCV_H_sub"/>
</dbReference>
<dbReference type="InterPro" id="IPR011053">
    <property type="entry name" value="Single_hybrid_motif"/>
</dbReference>
<dbReference type="NCBIfam" id="TIGR00527">
    <property type="entry name" value="gcvH"/>
    <property type="match status" value="1"/>
</dbReference>
<dbReference type="NCBIfam" id="NF002270">
    <property type="entry name" value="PRK01202.1"/>
    <property type="match status" value="1"/>
</dbReference>
<dbReference type="PANTHER" id="PTHR11715">
    <property type="entry name" value="GLYCINE CLEAVAGE SYSTEM H PROTEIN"/>
    <property type="match status" value="1"/>
</dbReference>
<dbReference type="PANTHER" id="PTHR11715:SF3">
    <property type="entry name" value="GLYCINE CLEAVAGE SYSTEM H PROTEIN-RELATED"/>
    <property type="match status" value="1"/>
</dbReference>
<dbReference type="Pfam" id="PF01597">
    <property type="entry name" value="GCV_H"/>
    <property type="match status" value="1"/>
</dbReference>
<dbReference type="SUPFAM" id="SSF51230">
    <property type="entry name" value="Single hybrid motif"/>
    <property type="match status" value="1"/>
</dbReference>
<dbReference type="PROSITE" id="PS50968">
    <property type="entry name" value="BIOTINYL_LIPOYL"/>
    <property type="match status" value="1"/>
</dbReference>
<dbReference type="PROSITE" id="PS00189">
    <property type="entry name" value="LIPOYL"/>
    <property type="match status" value="1"/>
</dbReference>
<name>GCSH_SHESA</name>
<reference key="1">
    <citation type="submission" date="2006-09" db="EMBL/GenBank/DDBJ databases">
        <title>Complete sequence of chromosome 1 of Shewanella sp. ANA-3.</title>
        <authorList>
            <person name="Copeland A."/>
            <person name="Lucas S."/>
            <person name="Lapidus A."/>
            <person name="Barry K."/>
            <person name="Detter J.C."/>
            <person name="Glavina del Rio T."/>
            <person name="Hammon N."/>
            <person name="Israni S."/>
            <person name="Dalin E."/>
            <person name="Tice H."/>
            <person name="Pitluck S."/>
            <person name="Chertkov O."/>
            <person name="Brettin T."/>
            <person name="Bruce D."/>
            <person name="Han C."/>
            <person name="Tapia R."/>
            <person name="Gilna P."/>
            <person name="Schmutz J."/>
            <person name="Larimer F."/>
            <person name="Land M."/>
            <person name="Hauser L."/>
            <person name="Kyrpides N."/>
            <person name="Kim E."/>
            <person name="Newman D."/>
            <person name="Salticov C."/>
            <person name="Konstantinidis K."/>
            <person name="Klappenback J."/>
            <person name="Tiedje J."/>
            <person name="Richardson P."/>
        </authorList>
    </citation>
    <scope>NUCLEOTIDE SEQUENCE [LARGE SCALE GENOMIC DNA]</scope>
    <source>
        <strain>ANA-3</strain>
    </source>
</reference>
<sequence length="129" mass="13992">MSNIPTELKYASSHEWIRKEEDGSYTVGITEHAQELLGDMVFVELPEVGDTVTAGDDCAVAESVKAASDIYAPISGEVIAVNEALEDSPELVNSDAYGEGWFFRVMPSDESEVDALLDAEGYQAVIDEE</sequence>
<comment type="function">
    <text evidence="1">The glycine cleavage system catalyzes the degradation of glycine. The H protein shuttles the methylamine group of glycine from the P protein to the T protein.</text>
</comment>
<comment type="cofactor">
    <cofactor evidence="1">
        <name>(R)-lipoate</name>
        <dbReference type="ChEBI" id="CHEBI:83088"/>
    </cofactor>
    <text evidence="1">Binds 1 lipoyl cofactor covalently.</text>
</comment>
<comment type="subunit">
    <text evidence="1">The glycine cleavage system is composed of four proteins: P, T, L and H.</text>
</comment>
<comment type="similarity">
    <text evidence="1">Belongs to the GcvH family.</text>
</comment>
<organism>
    <name type="scientific">Shewanella sp. (strain ANA-3)</name>
    <dbReference type="NCBI Taxonomy" id="94122"/>
    <lineage>
        <taxon>Bacteria</taxon>
        <taxon>Pseudomonadati</taxon>
        <taxon>Pseudomonadota</taxon>
        <taxon>Gammaproteobacteria</taxon>
        <taxon>Alteromonadales</taxon>
        <taxon>Shewanellaceae</taxon>
        <taxon>Shewanella</taxon>
    </lineage>
</organism>